<dbReference type="EMBL" id="CP001164">
    <property type="protein sequence ID" value="ACI38655.1"/>
    <property type="molecule type" value="Genomic_DNA"/>
</dbReference>
<dbReference type="RefSeq" id="WP_000903376.1">
    <property type="nucleotide sequence ID" value="NC_011353.1"/>
</dbReference>
<dbReference type="SMR" id="B5YTQ0"/>
<dbReference type="KEGG" id="ecf:ECH74115_4652"/>
<dbReference type="HOGENOM" id="CLU_166087_2_1_6"/>
<dbReference type="GO" id="GO:1990228">
    <property type="term" value="C:sulfurtransferase complex"/>
    <property type="evidence" value="ECO:0007669"/>
    <property type="project" value="TreeGrafter"/>
</dbReference>
<dbReference type="GO" id="GO:0002143">
    <property type="term" value="P:tRNA wobble position uridine thiolation"/>
    <property type="evidence" value="ECO:0007669"/>
    <property type="project" value="InterPro"/>
</dbReference>
<dbReference type="FunFam" id="3.40.1260.10:FF:000002">
    <property type="entry name" value="Sulfurtransferase TusB"/>
    <property type="match status" value="1"/>
</dbReference>
<dbReference type="Gene3D" id="3.40.1260.10">
    <property type="entry name" value="DsrEFH-like"/>
    <property type="match status" value="1"/>
</dbReference>
<dbReference type="HAMAP" id="MF_01564">
    <property type="entry name" value="Thiourid_synth_B"/>
    <property type="match status" value="1"/>
</dbReference>
<dbReference type="InterPro" id="IPR027396">
    <property type="entry name" value="DsrEFH-like"/>
</dbReference>
<dbReference type="InterPro" id="IPR023526">
    <property type="entry name" value="Sulphur_relay_TusB"/>
</dbReference>
<dbReference type="InterPro" id="IPR007215">
    <property type="entry name" value="Sulphur_relay_TusB/DsrH"/>
</dbReference>
<dbReference type="NCBIfam" id="NF010035">
    <property type="entry name" value="PRK13510.1"/>
    <property type="match status" value="1"/>
</dbReference>
<dbReference type="NCBIfam" id="TIGR03011">
    <property type="entry name" value="sulf_tusB_dsrH"/>
    <property type="match status" value="1"/>
</dbReference>
<dbReference type="PANTHER" id="PTHR37526">
    <property type="entry name" value="PROTEIN TUSB"/>
    <property type="match status" value="1"/>
</dbReference>
<dbReference type="PANTHER" id="PTHR37526:SF1">
    <property type="entry name" value="PROTEIN TUSB"/>
    <property type="match status" value="1"/>
</dbReference>
<dbReference type="Pfam" id="PF04077">
    <property type="entry name" value="DsrH"/>
    <property type="match status" value="1"/>
</dbReference>
<dbReference type="SUPFAM" id="SSF75169">
    <property type="entry name" value="DsrEFH-like"/>
    <property type="match status" value="1"/>
</dbReference>
<sequence length="95" mass="10662">MLHTLHRSPWLTDFAALLRLLSEGDELLLLQDGVTAAVDGNRYLESLRNAPIKVYALNEDLIARGLTGQISNDIIPIDYTDFVRLTVKHSGQMAW</sequence>
<feature type="chain" id="PRO_1000147176" description="Protein TusB">
    <location>
        <begin position="1"/>
        <end position="95"/>
    </location>
</feature>
<keyword id="KW-0963">Cytoplasm</keyword>
<keyword id="KW-0819">tRNA processing</keyword>
<accession>B5YTQ0</accession>
<comment type="function">
    <text evidence="1">Part of a sulfur-relay system required for 2-thiolation of 5-methylaminomethyl-2-thiouridine (mnm(5)s(2)U) at tRNA wobble positions.</text>
</comment>
<comment type="subunit">
    <text evidence="1">Heterohexamer, formed by a dimer of trimers. The hexameric TusBCD complex contains 2 copies each of TusB, TusC and TusD. The TusBCD complex interacts with TusE.</text>
</comment>
<comment type="subcellular location">
    <subcellularLocation>
        <location evidence="1">Cytoplasm</location>
    </subcellularLocation>
</comment>
<comment type="similarity">
    <text evidence="1">Belongs to the DsrH/TusB family.</text>
</comment>
<name>TUSB_ECO5E</name>
<protein>
    <recommendedName>
        <fullName evidence="1">Protein TusB</fullName>
    </recommendedName>
    <alternativeName>
        <fullName evidence="1">tRNA 2-thiouridine synthesizing protein B</fullName>
    </alternativeName>
</protein>
<evidence type="ECO:0000255" key="1">
    <source>
        <dbReference type="HAMAP-Rule" id="MF_01564"/>
    </source>
</evidence>
<reference key="1">
    <citation type="journal article" date="2011" name="Proc. Natl. Acad. Sci. U.S.A.">
        <title>Genomic anatomy of Escherichia coli O157:H7 outbreaks.</title>
        <authorList>
            <person name="Eppinger M."/>
            <person name="Mammel M.K."/>
            <person name="Leclerc J.E."/>
            <person name="Ravel J."/>
            <person name="Cebula T.A."/>
        </authorList>
    </citation>
    <scope>NUCLEOTIDE SEQUENCE [LARGE SCALE GENOMIC DNA]</scope>
    <source>
        <strain>EC4115 / EHEC</strain>
    </source>
</reference>
<proteinExistence type="inferred from homology"/>
<gene>
    <name evidence="1" type="primary">tusB</name>
    <name type="ordered locus">ECH74115_4652</name>
</gene>
<organism>
    <name type="scientific">Escherichia coli O157:H7 (strain EC4115 / EHEC)</name>
    <dbReference type="NCBI Taxonomy" id="444450"/>
    <lineage>
        <taxon>Bacteria</taxon>
        <taxon>Pseudomonadati</taxon>
        <taxon>Pseudomonadota</taxon>
        <taxon>Gammaproteobacteria</taxon>
        <taxon>Enterobacterales</taxon>
        <taxon>Enterobacteriaceae</taxon>
        <taxon>Escherichia</taxon>
    </lineage>
</organism>